<evidence type="ECO:0000250" key="1">
    <source>
        <dbReference type="UniProtKB" id="A1A4S6"/>
    </source>
</evidence>
<evidence type="ECO:0000255" key="2">
    <source>
        <dbReference type="PROSITE-ProRule" id="PRU00145"/>
    </source>
</evidence>
<evidence type="ECO:0000255" key="3">
    <source>
        <dbReference type="PROSITE-ProRule" id="PRU00172"/>
    </source>
</evidence>
<evidence type="ECO:0000255" key="4">
    <source>
        <dbReference type="PROSITE-ProRule" id="PRU00192"/>
    </source>
</evidence>
<evidence type="ECO:0000256" key="5">
    <source>
        <dbReference type="SAM" id="MobiDB-lite"/>
    </source>
</evidence>
<evidence type="ECO:0000269" key="6">
    <source>
    </source>
</evidence>
<evidence type="ECO:0000269" key="7">
    <source>
    </source>
</evidence>
<evidence type="ECO:0000303" key="8">
    <source>
    </source>
</evidence>
<evidence type="ECO:0000303" key="9">
    <source>
    </source>
</evidence>
<evidence type="ECO:0000305" key="10"/>
<accession>Q6Y5D8</accession>
<accession>Q6Y5D6</accession>
<accession>Q6Y5D7</accession>
<accession>Q99MT3</accession>
<accession>Q99MT4</accession>
<comment type="function">
    <text evidence="1 6 7">GTPase-activating protein that catalyzes the conversion of active GTP-bound Rho GTPases to their inactive GDP-bound form, thus suppressing various Rho GTPase-mediated cellular processes (PubMed:11238453). Also converts Cdc42 to an inactive GDP-bound state (By similarity). Essential for PTKB2 regulation of cytoskeletal organization via Rho family GTPases (PubMed:11238453). Inhibits PAK2 proteolytic fragment PAK-2p34 kinase activity and changes its localization from the nucleus to the perinuclear region. Stabilizes PAK-2p34 thereby increasing stimulation of cell death (PubMed:15471851). Associates with MICAL1 on the endosomal membrane to promote Rab8-Rab10-dependent tubule extension. After dissociation with MICAL1, recruits WDR44 which connects the endoplasmic reticulum (ER) with the endosomal tubule, thereby participating in the export of a subset of neosynthesized proteins (By similarity).</text>
</comment>
<comment type="subunit">
    <text evidence="1 6 7">Interacts with PKN3 (By similarity). Interacts with caspase-activated PAK2 proteolytic fragment PAK-2p34; the interaction does not affect ARHGAP10 GTPase activation activity towards RHOA and CDC42 (PubMed:15471851). Interacts via its SH3 domain with PTK2/FAK1. Interacts with PTK2B/PYK2; the interaction negatively regulates ARHGAP10 GTPase-activating activity (PubMed:11238453). Interacts with MICAL1 and WDR44; complex formation might transit from GRAF2/ARHGAP10-MICAL1 to GRAF2/ARHGAP10-WDR44 complexes (By similarity).</text>
</comment>
<comment type="interaction">
    <interactant intactId="EBI-4396535">
        <id>Q6Y5D8</id>
    </interactant>
    <interactant intactId="EBI-4406512">
        <id>PRO_0000304927</id>
        <label>PAK2</label>
        <dbReference type="UniProtKB" id="Q29502"/>
    </interactant>
    <organismsDiffer>true</organismsDiffer>
    <experiments>3</experiments>
</comment>
<comment type="interaction">
    <interactant intactId="EBI-4396677">
        <id>Q6Y5D8-1</id>
    </interactant>
    <interactant intactId="EBI-4406512">
        <id>PRO_0000304927</id>
        <label>PAK2</label>
        <dbReference type="UniProtKB" id="Q29502"/>
    </interactant>
    <organismsDiffer>true</organismsDiffer>
    <experiments>4</experiments>
</comment>
<comment type="subcellular location">
    <subcellularLocation>
        <location>Cytoplasm</location>
    </subcellularLocation>
    <subcellularLocation>
        <location>Cytoplasm</location>
        <location>Perinuclear region</location>
    </subcellularLocation>
    <subcellularLocation>
        <location>Cell membrane</location>
    </subcellularLocation>
    <subcellularLocation>
        <location evidence="1">Endosome membrane</location>
    </subcellularLocation>
    <text evidence="1">Association to cell membrane is dependent on PH domain. Colocalized with MICAL1, RAB8A, RAB8B and RAB10 on endosomal tubules (By similarity).</text>
</comment>
<comment type="alternative products">
    <event type="alternative splicing"/>
    <isoform>
        <id>Q6Y5D8-1</id>
        <name>1</name>
        <name>PS-GAP-a</name>
        <name>PSGAP-m</name>
        <sequence type="displayed"/>
    </isoform>
    <isoform>
        <id>Q6Y5D8-2</id>
        <name>2</name>
        <name>PS-GAP-b</name>
        <sequence type="described" ref="VSP_028128"/>
    </isoform>
    <isoform>
        <id>Q6Y5D8-3</id>
        <name>3</name>
        <name>PS-GAP-c</name>
        <sequence type="described" ref="VSP_028129"/>
    </isoform>
    <isoform>
        <id>Q6Y5D8-4</id>
        <name>4</name>
        <name>PS-GAP-s</name>
        <name>PSGAP-s</name>
        <sequence type="described" ref="VSP_028127"/>
    </isoform>
</comment>
<comment type="tissue specificity">
    <text evidence="7">High levels of expression in brain, testes, liver, heart and kidney.</text>
</comment>
<comment type="domain">
    <text evidence="1">The BAR domain is important to associate RAB8A (or RAB8B) and RAB10 to endosomal membrane to promote tubule extension. The BAR domain is also important to recruit WDR44 to endosomal tubules.</text>
</comment>
<comment type="PTM">
    <text>Phosphorylated on tyrosine residues, probably involving PTK2B/PYK2.</text>
</comment>
<reference key="1">
    <citation type="journal article" date="2001" name="J. Cell Biol.">
        <title>Regulation of CDC42 GTPase by proline-rich tyrosine kinase 2 interacting with PSGAP, a novel pleckstrin homology and Src homology 3 domain containing rhoGAP protein.</title>
        <authorList>
            <person name="Ren X.-R."/>
            <person name="Du Q.-S."/>
            <person name="Huang Y.-Z."/>
            <person name="Ao S.-Z."/>
            <person name="Mei L."/>
            <person name="Xiong W.-C."/>
        </authorList>
    </citation>
    <scope>NUCLEOTIDE SEQUENCE [MRNA] (ISOFORMS 1 AND 4)</scope>
    <scope>FUNCTION</scope>
    <scope>INTERACTION WITH PTK2/FAK1 AND PTK2B/PYK2</scope>
    <scope>SUBCELLULAR LOCATION</scope>
    <scope>PHOSPHORYLATION</scope>
    <scope>MUTAGENESIS OF ARG-418</scope>
    <source>
        <strain>C57BL/10J</strain>
    </source>
</reference>
<reference key="2">
    <citation type="journal article" date="2004" name="J. Biol. Chem.">
        <title>Identification and characterization of PS-GAP as a novel regulator of caspase-activated PAK-2.</title>
        <authorList>
            <person name="Koeppel M.A."/>
            <person name="McCarthy C.C."/>
            <person name="Moertl E."/>
            <person name="Jakobi R."/>
        </authorList>
    </citation>
    <scope>NUCLEOTIDE SEQUENCE [MRNA] (ISOFORMS 1; 2 AND 3)</scope>
    <scope>FUNCTION</scope>
    <scope>INTERACTION WITH PAK2</scope>
    <scope>SUBCELLULAR LOCATION</scope>
    <scope>TISSUE SPECIFICITY</scope>
    <source>
        <strain>BALB/cJ</strain>
        <tissue>Heart</tissue>
    </source>
</reference>
<sequence length="786" mass="89366">MGLQPLEFSDCYLDSPWFRERIRAHEAELERTNKFIKELIKDGKNLISATKSLSAAQRKFAHSLRDFKFEFIGDAETDDERCIDASLREFSNFLKNLEEQREIMALSVTETLIKPLEKFRKEQLGAVKEEKKKFDKETEKNYSLIDKHLTLSARKKDSHLQEADLQVEQNRQHFYELSLEYVCKLQEIQERKKFEFVEPMLSFFQGMFTFYHQGHELSKDFNHYKMELQINIQNTRNRFEGTRSEVEELMNKIRQNPKDQKRASQFTAEGYLYVQEKRPAPFGSSWVKHYCMYRKTAKKFNMIPFEHRSGGKLGDGEAFFLKECTKRHMDSTDRRFCFDIEAADRPGVPLTVQAFSEEERKQWLEALGGKEALFHTFNRAIVPRPEGGAQLDKMGFTILRKCISAVETRGINDQGLYRVVGVSSKVQRLLSMLMDVKMCNELDLENSADWEVKTVTSALKQYLRSLPEPLMTYELHRDFIVPAKSGSPESRVNAIHFLVHKLPEKNKEMLDILVKHLTNVSSHSKQNLMTVANLGVVFGPTLMRPQEETVAAIMDLKFQNIVVEILIENHEKIFRTSPDTTFAEPTCLSASPPNAPPRQSKRQGQRTKRPVAVYNLCLELEEGDSPSPLKEDPPSSSQDSLSTPSPTTSAAHGPPGLDGNHLAADGGSCGDATATTPSQTRPSMVQWLNMQSPTTPSSNPAGTPPSPRMSPFPLSPAASIVDKLPECVINRKARAVYPCEAEHSSELSFEIGAIFEDVQTSREPGWLEGTLNGKRGLIPQNYVKLL</sequence>
<organism>
    <name type="scientific">Mus musculus</name>
    <name type="common">Mouse</name>
    <dbReference type="NCBI Taxonomy" id="10090"/>
    <lineage>
        <taxon>Eukaryota</taxon>
        <taxon>Metazoa</taxon>
        <taxon>Chordata</taxon>
        <taxon>Craniata</taxon>
        <taxon>Vertebrata</taxon>
        <taxon>Euteleostomi</taxon>
        <taxon>Mammalia</taxon>
        <taxon>Eutheria</taxon>
        <taxon>Euarchontoglires</taxon>
        <taxon>Glires</taxon>
        <taxon>Rodentia</taxon>
        <taxon>Myomorpha</taxon>
        <taxon>Muroidea</taxon>
        <taxon>Muridae</taxon>
        <taxon>Murinae</taxon>
        <taxon>Mus</taxon>
        <taxon>Mus</taxon>
    </lineage>
</organism>
<feature type="chain" id="PRO_0000304915" description="Rho GTPase-activating protein 10">
    <location>
        <begin position="1"/>
        <end position="786"/>
    </location>
</feature>
<feature type="domain" description="BAR">
    <location>
        <begin position="7"/>
        <end position="262"/>
    </location>
</feature>
<feature type="domain" description="PH" evidence="2">
    <location>
        <begin position="265"/>
        <end position="372"/>
    </location>
</feature>
<feature type="domain" description="Rho-GAP" evidence="3">
    <location>
        <begin position="389"/>
        <end position="574"/>
    </location>
</feature>
<feature type="domain" description="SH3" evidence="4">
    <location>
        <begin position="728"/>
        <end position="786"/>
    </location>
</feature>
<feature type="region of interest" description="Disordered" evidence="5">
    <location>
        <begin position="584"/>
        <end position="609"/>
    </location>
</feature>
<feature type="region of interest" description="Disordered" evidence="5">
    <location>
        <begin position="622"/>
        <end position="714"/>
    </location>
</feature>
<feature type="compositionally biased region" description="Basic residues" evidence="5">
    <location>
        <begin position="599"/>
        <end position="609"/>
    </location>
</feature>
<feature type="compositionally biased region" description="Low complexity" evidence="5">
    <location>
        <begin position="634"/>
        <end position="649"/>
    </location>
</feature>
<feature type="compositionally biased region" description="Polar residues" evidence="5">
    <location>
        <begin position="673"/>
        <end position="701"/>
    </location>
</feature>
<feature type="compositionally biased region" description="Pro residues" evidence="5">
    <location>
        <begin position="702"/>
        <end position="714"/>
    </location>
</feature>
<feature type="site" description="Arginine finger; crucial for GTP hydrolysis by stabilizing the transition state" evidence="3">
    <location>
        <position position="418"/>
    </location>
</feature>
<feature type="splice variant" id="VSP_028127" description="In isoform 4." evidence="8">
    <location>
        <begin position="1"/>
        <end position="103"/>
    </location>
</feature>
<feature type="splice variant" id="VSP_028128" description="In isoform 2." evidence="9">
    <location>
        <begin position="388"/>
        <end position="409"/>
    </location>
</feature>
<feature type="splice variant" id="VSP_028129" description="In isoform 3." evidence="9">
    <location>
        <begin position="677"/>
        <end position="727"/>
    </location>
</feature>
<feature type="mutagenesis site" description="Inactive. Abolishes GTPase activity in vitro. Greatly diminishes cytoskeletal reorganization." evidence="6">
    <original>R</original>
    <variation>Q</variation>
    <location>
        <position position="418"/>
    </location>
</feature>
<feature type="sequence conflict" description="In Ref. 1; AAK18175." evidence="10" ref="1">
    <original>K</original>
    <variation>E</variation>
    <location>
        <position position="68"/>
    </location>
</feature>
<feature type="sequence conflict" description="In Ref. 1; AAK18175." evidence="10" ref="1">
    <original>G</original>
    <variation>D</variation>
    <location>
        <position position="73"/>
    </location>
</feature>
<feature type="sequence conflict" description="In Ref. 2; AAO62072." evidence="10" ref="2">
    <original>M</original>
    <variation>V</variation>
    <location>
        <position position="104"/>
    </location>
</feature>
<feature type="sequence conflict" description="In Ref. 1; AAK18175/AAK18174." evidence="10" ref="1">
    <original>K</original>
    <variation>E</variation>
    <location>
        <position position="136"/>
    </location>
</feature>
<feature type="sequence conflict" description="In Ref. 1; AAK18175/AAK18174." evidence="10" ref="1">
    <original>E</original>
    <variation>G</variation>
    <location>
        <position position="240"/>
    </location>
</feature>
<feature type="sequence conflict" description="In Ref. 2; AAO62073." evidence="10" ref="2">
    <original>M</original>
    <variation>T</variation>
    <location>
        <position position="329"/>
    </location>
</feature>
<feature type="sequence conflict" description="In Ref. 1; AAK18175/AAK18174." evidence="10" ref="1">
    <original>E</original>
    <variation>R</variation>
    <location>
        <position position="371"/>
    </location>
</feature>
<feature type="sequence conflict" description="In Ref. 1; AAK18175/AAK18174." evidence="10" ref="1">
    <original>A</original>
    <variation>S</variation>
    <location>
        <position position="372"/>
    </location>
</feature>
<feature type="sequence conflict" description="In Ref. 1; AAK18175/AAK18174." evidence="10" ref="1">
    <original>L</original>
    <variation>S</variation>
    <location>
        <position position="373"/>
    </location>
</feature>
<feature type="sequence conflict" description="In Ref. 1; AAK18175/AAK18174." evidence="10" ref="1">
    <original>F</original>
    <variation>V</variation>
    <location>
        <position position="374"/>
    </location>
</feature>
<feature type="sequence conflict" description="In Ref. 2; AAO62074." evidence="10" ref="2">
    <original>A</original>
    <variation>T</variation>
    <location>
        <position position="380"/>
    </location>
</feature>
<feature type="sequence conflict" description="In Ref. 2; AAO62074." evidence="10" ref="2">
    <original>A</original>
    <variation>T</variation>
    <location>
        <position position="405"/>
    </location>
</feature>
<feature type="sequence conflict" description="In Ref. 2; AAO62074." evidence="10" ref="2">
    <original>H</original>
    <variation>R</variation>
    <location>
        <position position="570"/>
    </location>
</feature>
<feature type="sequence conflict" description="In Ref. 2; AAO62072/AAO62073/AAO62074." evidence="10" ref="2">
    <original>S</original>
    <variation>N</variation>
    <location>
        <position position="668"/>
    </location>
</feature>
<feature type="sequence conflict" description="In Ref. 2; AAO62073." evidence="10" ref="2">
    <original>T</original>
    <variation>A</variation>
    <location>
        <position position="770"/>
    </location>
</feature>
<gene>
    <name type="primary">Arhgap10</name>
</gene>
<keyword id="KW-0025">Alternative splicing</keyword>
<keyword id="KW-1003">Cell membrane</keyword>
<keyword id="KW-0963">Cytoplasm</keyword>
<keyword id="KW-0967">Endosome</keyword>
<keyword id="KW-0343">GTPase activation</keyword>
<keyword id="KW-0472">Membrane</keyword>
<keyword id="KW-0597">Phosphoprotein</keyword>
<keyword id="KW-1185">Reference proteome</keyword>
<keyword id="KW-0728">SH3 domain</keyword>
<name>RHG10_MOUSE</name>
<dbReference type="EMBL" id="AF297029">
    <property type="protein sequence ID" value="AAK18174.1"/>
    <property type="molecule type" value="mRNA"/>
</dbReference>
<dbReference type="EMBL" id="AF297030">
    <property type="protein sequence ID" value="AAK18175.1"/>
    <property type="molecule type" value="mRNA"/>
</dbReference>
<dbReference type="EMBL" id="AY179965">
    <property type="protein sequence ID" value="AAO62072.1"/>
    <property type="molecule type" value="mRNA"/>
</dbReference>
<dbReference type="EMBL" id="AY179966">
    <property type="protein sequence ID" value="AAO62073.1"/>
    <property type="molecule type" value="mRNA"/>
</dbReference>
<dbReference type="EMBL" id="AY179967">
    <property type="protein sequence ID" value="AAO62074.1"/>
    <property type="molecule type" value="mRNA"/>
</dbReference>
<dbReference type="CCDS" id="CCDS22425.1">
    <molecule id="Q6Y5D8-1"/>
</dbReference>
<dbReference type="CCDS" id="CCDS90420.1">
    <molecule id="Q6Y5D8-2"/>
</dbReference>
<dbReference type="CCDS" id="CCDS90421.1">
    <molecule id="Q6Y5D8-3"/>
</dbReference>
<dbReference type="RefSeq" id="NP_001350346.1">
    <molecule id="Q6Y5D8-2"/>
    <property type="nucleotide sequence ID" value="NM_001363417.1"/>
</dbReference>
<dbReference type="RefSeq" id="NP_001350347.1">
    <molecule id="Q6Y5D8-3"/>
    <property type="nucleotide sequence ID" value="NM_001363418.1"/>
</dbReference>
<dbReference type="RefSeq" id="NP_001350348.1">
    <molecule id="Q6Y5D8-4"/>
    <property type="nucleotide sequence ID" value="NM_001363419.1"/>
</dbReference>
<dbReference type="RefSeq" id="NP_084389.2">
    <molecule id="Q6Y5D8-1"/>
    <property type="nucleotide sequence ID" value="NM_030113.2"/>
</dbReference>
<dbReference type="RefSeq" id="XP_006531558.1">
    <property type="nucleotide sequence ID" value="XM_006531495.3"/>
</dbReference>
<dbReference type="RefSeq" id="XP_006531561.1">
    <property type="nucleotide sequence ID" value="XM_006531498.3"/>
</dbReference>
<dbReference type="RefSeq" id="XP_006531563.1">
    <property type="nucleotide sequence ID" value="XM_006531500.2"/>
</dbReference>
<dbReference type="RefSeq" id="XP_017168506.1">
    <property type="nucleotide sequence ID" value="XM_017313017.1"/>
</dbReference>
<dbReference type="RefSeq" id="XP_036010275.1">
    <molecule id="Q6Y5D8-4"/>
    <property type="nucleotide sequence ID" value="XM_036154382.1"/>
</dbReference>
<dbReference type="SMR" id="Q6Y5D8"/>
<dbReference type="BioGRID" id="219450">
    <property type="interactions" value="10"/>
</dbReference>
<dbReference type="FunCoup" id="Q6Y5D8">
    <property type="interactions" value="907"/>
</dbReference>
<dbReference type="IntAct" id="Q6Y5D8">
    <property type="interactions" value="1"/>
</dbReference>
<dbReference type="STRING" id="10090.ENSMUSP00000075658"/>
<dbReference type="GlyGen" id="Q6Y5D8">
    <property type="glycosylation" value="1 site"/>
</dbReference>
<dbReference type="iPTMnet" id="Q6Y5D8"/>
<dbReference type="PhosphoSitePlus" id="Q6Y5D8"/>
<dbReference type="jPOST" id="Q6Y5D8"/>
<dbReference type="PaxDb" id="10090-ENSMUSP00000075658"/>
<dbReference type="PeptideAtlas" id="Q6Y5D8"/>
<dbReference type="ProteomicsDB" id="255259">
    <molecule id="Q6Y5D8-1"/>
</dbReference>
<dbReference type="ProteomicsDB" id="255260">
    <molecule id="Q6Y5D8-2"/>
</dbReference>
<dbReference type="ProteomicsDB" id="255261">
    <molecule id="Q6Y5D8-3"/>
</dbReference>
<dbReference type="ProteomicsDB" id="255262">
    <molecule id="Q6Y5D8-4"/>
</dbReference>
<dbReference type="Pumba" id="Q6Y5D8"/>
<dbReference type="Antibodypedia" id="45497">
    <property type="antibodies" value="110 antibodies from 17 providers"/>
</dbReference>
<dbReference type="DNASU" id="78514"/>
<dbReference type="Ensembl" id="ENSMUST00000076316.6">
    <molecule id="Q6Y5D8-1"/>
    <property type="protein sequence ID" value="ENSMUSP00000075658.5"/>
    <property type="gene ID" value="ENSMUSG00000037148.9"/>
</dbReference>
<dbReference type="Ensembl" id="ENSMUST00000210519.2">
    <molecule id="Q6Y5D8-2"/>
    <property type="protein sequence ID" value="ENSMUSP00000147493.2"/>
    <property type="gene ID" value="ENSMUSG00000037148.9"/>
</dbReference>
<dbReference type="Ensembl" id="ENSMUST00000210922.2">
    <molecule id="Q6Y5D8-3"/>
    <property type="protein sequence ID" value="ENSMUSP00000147485.2"/>
    <property type="gene ID" value="ENSMUSG00000037148.9"/>
</dbReference>
<dbReference type="GeneID" id="78514"/>
<dbReference type="KEGG" id="mmu:78514"/>
<dbReference type="UCSC" id="uc009mhm.1">
    <molecule id="Q6Y5D8-1"/>
    <property type="organism name" value="mouse"/>
</dbReference>
<dbReference type="UCSC" id="uc009mhn.1">
    <molecule id="Q6Y5D8-3"/>
    <property type="organism name" value="mouse"/>
</dbReference>
<dbReference type="UCSC" id="uc012gge.1">
    <molecule id="Q6Y5D8-2"/>
    <property type="organism name" value="mouse"/>
</dbReference>
<dbReference type="AGR" id="MGI:1925764"/>
<dbReference type="CTD" id="79658"/>
<dbReference type="MGI" id="MGI:1925764">
    <property type="gene designation" value="Arhgap10"/>
</dbReference>
<dbReference type="VEuPathDB" id="HostDB:ENSMUSG00000037148"/>
<dbReference type="eggNOG" id="KOG1451">
    <property type="taxonomic scope" value="Eukaryota"/>
</dbReference>
<dbReference type="GeneTree" id="ENSGT00940000159559"/>
<dbReference type="HOGENOM" id="CLU_011532_2_0_1"/>
<dbReference type="InParanoid" id="Q6Y5D8"/>
<dbReference type="OMA" id="MRSPMVQ"/>
<dbReference type="OrthoDB" id="3183924at2759"/>
<dbReference type="PhylomeDB" id="Q6Y5D8"/>
<dbReference type="TreeFam" id="TF316851"/>
<dbReference type="Reactome" id="R-MMU-8980692">
    <property type="pathway name" value="RHOA GTPase cycle"/>
</dbReference>
<dbReference type="Reactome" id="R-MMU-9013148">
    <property type="pathway name" value="CDC42 GTPase cycle"/>
</dbReference>
<dbReference type="Reactome" id="R-MMU-9013149">
    <property type="pathway name" value="RAC1 GTPase cycle"/>
</dbReference>
<dbReference type="BioGRID-ORCS" id="78514">
    <property type="hits" value="5 hits in 74 CRISPR screens"/>
</dbReference>
<dbReference type="ChiTaRS" id="Arhgap10">
    <property type="organism name" value="mouse"/>
</dbReference>
<dbReference type="PRO" id="PR:Q6Y5D8"/>
<dbReference type="Proteomes" id="UP000000589">
    <property type="component" value="Chromosome 8"/>
</dbReference>
<dbReference type="RNAct" id="Q6Y5D8">
    <property type="molecule type" value="protein"/>
</dbReference>
<dbReference type="Bgee" id="ENSMUSG00000037148">
    <property type="expression patterns" value="Expressed in interventricular septum and 131 other cell types or tissues"/>
</dbReference>
<dbReference type="GO" id="GO:0005829">
    <property type="term" value="C:cytosol"/>
    <property type="evidence" value="ECO:0000315"/>
    <property type="project" value="UniProtKB"/>
</dbReference>
<dbReference type="GO" id="GO:0010008">
    <property type="term" value="C:endosome membrane"/>
    <property type="evidence" value="ECO:0000250"/>
    <property type="project" value="UniProtKB"/>
</dbReference>
<dbReference type="GO" id="GO:0048471">
    <property type="term" value="C:perinuclear region of cytoplasm"/>
    <property type="evidence" value="ECO:0007669"/>
    <property type="project" value="UniProtKB-SubCell"/>
</dbReference>
<dbReference type="GO" id="GO:0005886">
    <property type="term" value="C:plasma membrane"/>
    <property type="evidence" value="ECO:0007669"/>
    <property type="project" value="UniProtKB-SubCell"/>
</dbReference>
<dbReference type="GO" id="GO:0005096">
    <property type="term" value="F:GTPase activator activity"/>
    <property type="evidence" value="ECO:0000314"/>
    <property type="project" value="MGI"/>
</dbReference>
<dbReference type="GO" id="GO:0007010">
    <property type="term" value="P:cytoskeleton organization"/>
    <property type="evidence" value="ECO:0000315"/>
    <property type="project" value="MGI"/>
</dbReference>
<dbReference type="GO" id="GO:0043066">
    <property type="term" value="P:negative regulation of apoptotic process"/>
    <property type="evidence" value="ECO:0000315"/>
    <property type="project" value="UniProtKB"/>
</dbReference>
<dbReference type="GO" id="GO:0007165">
    <property type="term" value="P:signal transduction"/>
    <property type="evidence" value="ECO:0007669"/>
    <property type="project" value="InterPro"/>
</dbReference>
<dbReference type="CDD" id="cd01249">
    <property type="entry name" value="BAR-PH_GRAF_family"/>
    <property type="match status" value="1"/>
</dbReference>
<dbReference type="CDD" id="cd04374">
    <property type="entry name" value="RhoGAP_Graf"/>
    <property type="match status" value="1"/>
</dbReference>
<dbReference type="CDD" id="cd12065">
    <property type="entry name" value="SH3_GRAF2"/>
    <property type="match status" value="1"/>
</dbReference>
<dbReference type="FunFam" id="2.30.29.30:FF:000157">
    <property type="entry name" value="Putative rho GTPase-activating protein 10"/>
    <property type="match status" value="1"/>
</dbReference>
<dbReference type="FunFam" id="1.10.555.10:FF:000006">
    <property type="entry name" value="Rho GTPase activating protein 26"/>
    <property type="match status" value="1"/>
</dbReference>
<dbReference type="FunFam" id="1.20.1270.60:FF:000001">
    <property type="entry name" value="Rho GTPase-activating protein 26"/>
    <property type="match status" value="1"/>
</dbReference>
<dbReference type="FunFam" id="2.30.30.40:FF:000055">
    <property type="entry name" value="rho GTPase-activating protein 26 isoform X1"/>
    <property type="match status" value="1"/>
</dbReference>
<dbReference type="Gene3D" id="1.20.1270.60">
    <property type="entry name" value="Arfaptin homology (AH) domain/BAR domain"/>
    <property type="match status" value="1"/>
</dbReference>
<dbReference type="Gene3D" id="2.30.29.30">
    <property type="entry name" value="Pleckstrin-homology domain (PH domain)/Phosphotyrosine-binding domain (PTB)"/>
    <property type="match status" value="1"/>
</dbReference>
<dbReference type="Gene3D" id="1.10.555.10">
    <property type="entry name" value="Rho GTPase activation protein"/>
    <property type="match status" value="1"/>
</dbReference>
<dbReference type="Gene3D" id="2.30.30.40">
    <property type="entry name" value="SH3 Domains"/>
    <property type="match status" value="1"/>
</dbReference>
<dbReference type="InterPro" id="IPR027267">
    <property type="entry name" value="AH/BAR_dom_sf"/>
</dbReference>
<dbReference type="InterPro" id="IPR004148">
    <property type="entry name" value="BAR_dom"/>
</dbReference>
<dbReference type="InterPro" id="IPR035485">
    <property type="entry name" value="GRAF2_SH3"/>
</dbReference>
<dbReference type="InterPro" id="IPR047234">
    <property type="entry name" value="GRAF_fam"/>
</dbReference>
<dbReference type="InterPro" id="IPR011993">
    <property type="entry name" value="PH-like_dom_sf"/>
</dbReference>
<dbReference type="InterPro" id="IPR001849">
    <property type="entry name" value="PH_domain"/>
</dbReference>
<dbReference type="InterPro" id="IPR047225">
    <property type="entry name" value="PH_GRAF"/>
</dbReference>
<dbReference type="InterPro" id="IPR008936">
    <property type="entry name" value="Rho_GTPase_activation_prot"/>
</dbReference>
<dbReference type="InterPro" id="IPR000198">
    <property type="entry name" value="RhoGAP_dom"/>
</dbReference>
<dbReference type="InterPro" id="IPR036028">
    <property type="entry name" value="SH3-like_dom_sf"/>
</dbReference>
<dbReference type="InterPro" id="IPR001452">
    <property type="entry name" value="SH3_domain"/>
</dbReference>
<dbReference type="PANTHER" id="PTHR12552">
    <property type="entry name" value="OLIGOPHRENIN 1"/>
    <property type="match status" value="1"/>
</dbReference>
<dbReference type="PANTHER" id="PTHR12552:SF5">
    <property type="entry name" value="RHO GTPASE-ACTIVATING PROTEIN 10"/>
    <property type="match status" value="1"/>
</dbReference>
<dbReference type="Pfam" id="PF16746">
    <property type="entry name" value="BAR_3"/>
    <property type="match status" value="1"/>
</dbReference>
<dbReference type="Pfam" id="PF00169">
    <property type="entry name" value="PH"/>
    <property type="match status" value="1"/>
</dbReference>
<dbReference type="Pfam" id="PF00620">
    <property type="entry name" value="RhoGAP"/>
    <property type="match status" value="1"/>
</dbReference>
<dbReference type="Pfam" id="PF14604">
    <property type="entry name" value="SH3_9"/>
    <property type="match status" value="1"/>
</dbReference>
<dbReference type="SMART" id="SM00233">
    <property type="entry name" value="PH"/>
    <property type="match status" value="1"/>
</dbReference>
<dbReference type="SMART" id="SM00324">
    <property type="entry name" value="RhoGAP"/>
    <property type="match status" value="1"/>
</dbReference>
<dbReference type="SMART" id="SM00326">
    <property type="entry name" value="SH3"/>
    <property type="match status" value="1"/>
</dbReference>
<dbReference type="SUPFAM" id="SSF103657">
    <property type="entry name" value="BAR/IMD domain-like"/>
    <property type="match status" value="1"/>
</dbReference>
<dbReference type="SUPFAM" id="SSF48350">
    <property type="entry name" value="GTPase activation domain, GAP"/>
    <property type="match status" value="1"/>
</dbReference>
<dbReference type="SUPFAM" id="SSF50729">
    <property type="entry name" value="PH domain-like"/>
    <property type="match status" value="1"/>
</dbReference>
<dbReference type="SUPFAM" id="SSF50044">
    <property type="entry name" value="SH3-domain"/>
    <property type="match status" value="1"/>
</dbReference>
<dbReference type="PROSITE" id="PS50003">
    <property type="entry name" value="PH_DOMAIN"/>
    <property type="match status" value="1"/>
</dbReference>
<dbReference type="PROSITE" id="PS50238">
    <property type="entry name" value="RHOGAP"/>
    <property type="match status" value="1"/>
</dbReference>
<dbReference type="PROSITE" id="PS50002">
    <property type="entry name" value="SH3"/>
    <property type="match status" value="1"/>
</dbReference>
<protein>
    <recommendedName>
        <fullName>Rho GTPase-activating protein 10</fullName>
    </recommendedName>
    <alternativeName>
        <fullName>PH and SH3 domain-containing rhoGAP protein</fullName>
        <shortName>PS-GAP</shortName>
        <shortName>PSGAP</shortName>
    </alternativeName>
    <alternativeName>
        <fullName>Rho-type GTPase-activating protein 10</fullName>
    </alternativeName>
</protein>
<proteinExistence type="evidence at protein level"/>